<comment type="function">
    <text evidence="4">Part of a membrane-bound complex that couples electron transfer with translocation of ions across the membrane. Catalyzes Na(+) transport, most probably coupled to electron transfer from reduced ferredoxin to methanophenazine and heterodisulfide reductase. Involved in heterodisulfide reduction during methanogenesis from acetate.</text>
</comment>
<comment type="cofactor">
    <cofactor evidence="2 8">
        <name>[4Fe-4S] cluster</name>
        <dbReference type="ChEBI" id="CHEBI:49883"/>
    </cofactor>
    <text evidence="6">Binds 5 [4Fe-4S] clusters.</text>
</comment>
<comment type="subunit">
    <text evidence="2 7">The Rnf complex is probably composed of eight subunits, including RnfA, RnfB, RnfC, RnfD, RnfE and RnfG.</text>
</comment>
<comment type="subcellular location">
    <subcellularLocation>
        <location evidence="2 5">Cell membrane</location>
        <topology evidence="1 5">Single-pass membrane protein</topology>
    </subcellularLocation>
</comment>
<comment type="disruption phenotype">
    <text evidence="4">Deletion of the rnf operon abolishes growth on acetate and ferredoxin:heterodisulfide oxidoreductase-coupled Na(+) transport.</text>
</comment>
<comment type="similarity">
    <text evidence="2">Belongs to the 4Fe4S bacterial-type ferredoxin family. RnfB subfamily.</text>
</comment>
<sequence length="264" mass="27352">MSSVLINSIAVLAGLGFAVGVMLVIASKVFKIDSNPLIDDVASLLPGANCGGCGFAGCAACAEAIVEQGAPVNSCPVGGFEVAKQIGALLGQEVTESEKEFPFVRCQGGNQHCTTLYDYHGVENCKVALMLCDSRKGCTYGCLGLGTCVQACQFGALSMGEDGFPVVNKALCTSCGNCIAACPNGVLTFARDSEKVHVLCRSHDKGKDVKAVCEVGCIGCKKCEKECPAGAIRVTEFLAEIDQEKCTACGACVAICPQKAIELR</sequence>
<organism>
    <name type="scientific">Methanosarcina acetivorans (strain ATCC 35395 / DSM 2834 / JCM 12185 / C2A)</name>
    <dbReference type="NCBI Taxonomy" id="188937"/>
    <lineage>
        <taxon>Archaea</taxon>
        <taxon>Methanobacteriati</taxon>
        <taxon>Methanobacteriota</taxon>
        <taxon>Stenosarchaea group</taxon>
        <taxon>Methanomicrobia</taxon>
        <taxon>Methanosarcinales</taxon>
        <taxon>Methanosarcinaceae</taxon>
        <taxon>Methanosarcina</taxon>
    </lineage>
</organism>
<keyword id="KW-0004">4Fe-4S</keyword>
<keyword id="KW-1003">Cell membrane</keyword>
<keyword id="KW-0249">Electron transport</keyword>
<keyword id="KW-0408">Iron</keyword>
<keyword id="KW-0411">Iron-sulfur</keyword>
<keyword id="KW-0472">Membrane</keyword>
<keyword id="KW-0479">Metal-binding</keyword>
<keyword id="KW-1185">Reference proteome</keyword>
<keyword id="KW-0677">Repeat</keyword>
<keyword id="KW-1278">Translocase</keyword>
<keyword id="KW-0812">Transmembrane</keyword>
<keyword id="KW-1133">Transmembrane helix</keyword>
<keyword id="KW-0813">Transport</keyword>
<evidence type="ECO:0000255" key="1"/>
<evidence type="ECO:0000255" key="2">
    <source>
        <dbReference type="HAMAP-Rule" id="MF_00463"/>
    </source>
</evidence>
<evidence type="ECO:0000255" key="3">
    <source>
        <dbReference type="PROSITE-ProRule" id="PRU00711"/>
    </source>
</evidence>
<evidence type="ECO:0000269" key="4">
    <source>
    </source>
</evidence>
<evidence type="ECO:0000269" key="5">
    <source>
    </source>
</evidence>
<evidence type="ECO:0000305" key="6"/>
<evidence type="ECO:0000305" key="7">
    <source>
    </source>
</evidence>
<evidence type="ECO:0000305" key="8">
    <source>
    </source>
</evidence>
<evidence type="ECO:0000312" key="9">
    <source>
        <dbReference type="EMBL" id="AAM04106.1"/>
    </source>
</evidence>
<gene>
    <name evidence="2" type="primary">rnfB</name>
    <name evidence="9" type="ordered locus">MA_0664</name>
</gene>
<name>RNFB_METAC</name>
<feature type="chain" id="PRO_0000443519" description="Ion-translocating oxidoreductase complex subunit B">
    <location>
        <begin position="1"/>
        <end position="264"/>
    </location>
</feature>
<feature type="transmembrane region" description="Helical" evidence="1">
    <location>
        <begin position="5"/>
        <end position="25"/>
    </location>
</feature>
<feature type="domain" description="4Fe-4S" evidence="2">
    <location>
        <begin position="33"/>
        <end position="92"/>
    </location>
</feature>
<feature type="domain" description="4Fe-4S ferredoxin-type 1" evidence="2">
    <location>
        <begin position="127"/>
        <end position="162"/>
    </location>
</feature>
<feature type="domain" description="4Fe-4S ferredoxin-type 2" evidence="2">
    <location>
        <begin position="163"/>
        <end position="192"/>
    </location>
</feature>
<feature type="domain" description="4Fe-4S ferredoxin-type 3" evidence="2">
    <location>
        <begin position="207"/>
        <end position="236"/>
    </location>
</feature>
<feature type="domain" description="4Fe-4S ferredoxin-type 4" evidence="2">
    <location>
        <begin position="237"/>
        <end position="264"/>
    </location>
</feature>
<feature type="binding site" evidence="2">
    <location>
        <position position="50"/>
    </location>
    <ligand>
        <name>[4Fe-4S] cluster</name>
        <dbReference type="ChEBI" id="CHEBI:49883"/>
        <label>1</label>
    </ligand>
</feature>
<feature type="binding site" evidence="2">
    <location>
        <position position="53"/>
    </location>
    <ligand>
        <name>[4Fe-4S] cluster</name>
        <dbReference type="ChEBI" id="CHEBI:49883"/>
        <label>1</label>
    </ligand>
</feature>
<feature type="binding site" evidence="2">
    <location>
        <position position="58"/>
    </location>
    <ligand>
        <name>[4Fe-4S] cluster</name>
        <dbReference type="ChEBI" id="CHEBI:49883"/>
        <label>1</label>
    </ligand>
</feature>
<feature type="binding site" evidence="2">
    <location>
        <position position="75"/>
    </location>
    <ligand>
        <name>[4Fe-4S] cluster</name>
        <dbReference type="ChEBI" id="CHEBI:49883"/>
        <label>1</label>
    </ligand>
</feature>
<feature type="binding site" evidence="2">
    <location>
        <position position="138"/>
    </location>
    <ligand>
        <name>[4Fe-4S] cluster</name>
        <dbReference type="ChEBI" id="CHEBI:49883"/>
        <label>2</label>
    </ligand>
</feature>
<feature type="binding site" evidence="2">
    <location>
        <position position="142"/>
    </location>
    <ligand>
        <name>[4Fe-4S] cluster</name>
        <dbReference type="ChEBI" id="CHEBI:49883"/>
        <label>2</label>
    </ligand>
</feature>
<feature type="binding site" evidence="2">
    <location>
        <position position="148"/>
    </location>
    <ligand>
        <name>[4Fe-4S] cluster</name>
        <dbReference type="ChEBI" id="CHEBI:49883"/>
        <label>2</label>
    </ligand>
</feature>
<feature type="binding site" evidence="2">
    <location>
        <position position="152"/>
    </location>
    <ligand>
        <name>[4Fe-4S] cluster</name>
        <dbReference type="ChEBI" id="CHEBI:49883"/>
        <label>3</label>
    </ligand>
</feature>
<feature type="binding site" evidence="2">
    <location>
        <position position="172"/>
    </location>
    <ligand>
        <name>[4Fe-4S] cluster</name>
        <dbReference type="ChEBI" id="CHEBI:49883"/>
        <label>3</label>
    </ligand>
</feature>
<feature type="binding site" evidence="2">
    <location>
        <position position="175"/>
    </location>
    <ligand>
        <name>[4Fe-4S] cluster</name>
        <dbReference type="ChEBI" id="CHEBI:49883"/>
        <label>3</label>
    </ligand>
</feature>
<feature type="binding site" evidence="2">
    <location>
        <position position="178"/>
    </location>
    <ligand>
        <name>[4Fe-4S] cluster</name>
        <dbReference type="ChEBI" id="CHEBI:49883"/>
        <label>3</label>
    </ligand>
</feature>
<feature type="binding site" evidence="2">
    <location>
        <position position="182"/>
    </location>
    <ligand>
        <name>[4Fe-4S] cluster</name>
        <dbReference type="ChEBI" id="CHEBI:49883"/>
        <label>2</label>
    </ligand>
</feature>
<feature type="binding site" evidence="2">
    <location>
        <position position="217"/>
    </location>
    <ligand>
        <name>[4Fe-4S] cluster</name>
        <dbReference type="ChEBI" id="CHEBI:49883"/>
        <label>4</label>
    </ligand>
</feature>
<feature type="binding site" evidence="2">
    <location>
        <position position="220"/>
    </location>
    <ligand>
        <name>[4Fe-4S] cluster</name>
        <dbReference type="ChEBI" id="CHEBI:49883"/>
        <label>4</label>
    </ligand>
</feature>
<feature type="binding site" evidence="2">
    <location>
        <position position="223"/>
    </location>
    <ligand>
        <name>[4Fe-4S] cluster</name>
        <dbReference type="ChEBI" id="CHEBI:49883"/>
        <label>4</label>
    </ligand>
</feature>
<feature type="binding site" evidence="2">
    <location>
        <position position="227"/>
    </location>
    <ligand>
        <name>[4Fe-4S] cluster</name>
        <dbReference type="ChEBI" id="CHEBI:49883"/>
        <label>4</label>
    </ligand>
</feature>
<feature type="binding site" evidence="3">
    <location>
        <position position="246"/>
    </location>
    <ligand>
        <name>[4Fe-4S] cluster</name>
        <dbReference type="ChEBI" id="CHEBI:49883"/>
        <label>5</label>
    </ligand>
</feature>
<feature type="binding site" evidence="3">
    <location>
        <position position="249"/>
    </location>
    <ligand>
        <name>[4Fe-4S] cluster</name>
        <dbReference type="ChEBI" id="CHEBI:49883"/>
        <label>5</label>
    </ligand>
</feature>
<feature type="binding site" evidence="3">
    <location>
        <position position="252"/>
    </location>
    <ligand>
        <name>[4Fe-4S] cluster</name>
        <dbReference type="ChEBI" id="CHEBI:49883"/>
        <label>5</label>
    </ligand>
</feature>
<feature type="binding site" evidence="3">
    <location>
        <position position="256"/>
    </location>
    <ligand>
        <name>[4Fe-4S] cluster</name>
        <dbReference type="ChEBI" id="CHEBI:49883"/>
        <label>5</label>
    </ligand>
</feature>
<dbReference type="EC" id="7.2.1.-" evidence="2 6"/>
<dbReference type="EMBL" id="AE010299">
    <property type="protein sequence ID" value="AAM04106.1"/>
    <property type="molecule type" value="Genomic_DNA"/>
</dbReference>
<dbReference type="STRING" id="188937.MA_0664"/>
<dbReference type="TCDB" id="3.D.6.1.3">
    <property type="family name" value="the ion (h(+) or na(+))-translocating nadh:ferredoxin oxidoreductase (nfo or rnf) family"/>
</dbReference>
<dbReference type="EnsemblBacteria" id="AAM04106">
    <property type="protein sequence ID" value="AAM04106"/>
    <property type="gene ID" value="MA_0664"/>
</dbReference>
<dbReference type="KEGG" id="mac:MA_0664"/>
<dbReference type="HOGENOM" id="CLU_053470_0_0_2"/>
<dbReference type="InParanoid" id="Q8TSX9"/>
<dbReference type="OrthoDB" id="23478at2157"/>
<dbReference type="PhylomeDB" id="Q8TSX9"/>
<dbReference type="BRENDA" id="7.2.1.2">
    <property type="organism ID" value="7224"/>
</dbReference>
<dbReference type="Proteomes" id="UP000002487">
    <property type="component" value="Chromosome"/>
</dbReference>
<dbReference type="GO" id="GO:0005886">
    <property type="term" value="C:plasma membrane"/>
    <property type="evidence" value="ECO:0007669"/>
    <property type="project" value="UniProtKB-SubCell"/>
</dbReference>
<dbReference type="GO" id="GO:0051539">
    <property type="term" value="F:4 iron, 4 sulfur cluster binding"/>
    <property type="evidence" value="ECO:0007669"/>
    <property type="project" value="UniProtKB-UniRule"/>
</dbReference>
<dbReference type="GO" id="GO:0009055">
    <property type="term" value="F:electron transfer activity"/>
    <property type="evidence" value="ECO:0007669"/>
    <property type="project" value="InterPro"/>
</dbReference>
<dbReference type="GO" id="GO:0046872">
    <property type="term" value="F:metal ion binding"/>
    <property type="evidence" value="ECO:0007669"/>
    <property type="project" value="UniProtKB-KW"/>
</dbReference>
<dbReference type="GO" id="GO:0016491">
    <property type="term" value="F:oxidoreductase activity"/>
    <property type="evidence" value="ECO:0007669"/>
    <property type="project" value="UniProtKB-ARBA"/>
</dbReference>
<dbReference type="GO" id="GO:0022900">
    <property type="term" value="P:electron transport chain"/>
    <property type="evidence" value="ECO:0007669"/>
    <property type="project" value="UniProtKB-UniRule"/>
</dbReference>
<dbReference type="CDD" id="cd10549">
    <property type="entry name" value="MtMvhB_like"/>
    <property type="match status" value="1"/>
</dbReference>
<dbReference type="Gene3D" id="3.30.70.20">
    <property type="match status" value="2"/>
</dbReference>
<dbReference type="Gene3D" id="3.20.20.20">
    <property type="entry name" value="Dihydropteroate synthase-like"/>
    <property type="match status" value="1"/>
</dbReference>
<dbReference type="HAMAP" id="MF_00463">
    <property type="entry name" value="RsxB_RnfB"/>
    <property type="match status" value="1"/>
</dbReference>
<dbReference type="InterPro" id="IPR007202">
    <property type="entry name" value="4Fe-4S_dom"/>
</dbReference>
<dbReference type="InterPro" id="IPR017896">
    <property type="entry name" value="4Fe4S_Fe-S-bd"/>
</dbReference>
<dbReference type="InterPro" id="IPR017900">
    <property type="entry name" value="4Fe4S_Fe_S_CS"/>
</dbReference>
<dbReference type="InterPro" id="IPR050395">
    <property type="entry name" value="4Fe4S_Ferredoxin_RnfB"/>
</dbReference>
<dbReference type="InterPro" id="IPR011005">
    <property type="entry name" value="Dihydropteroate_synth-like_sf"/>
</dbReference>
<dbReference type="InterPro" id="IPR010207">
    <property type="entry name" value="Elect_transpt_cplx_RnfB/RsxB"/>
</dbReference>
<dbReference type="InterPro" id="IPR049679">
    <property type="entry name" value="Ion_transpt_RnfB_Methano"/>
</dbReference>
<dbReference type="NCBIfam" id="NF005505">
    <property type="entry name" value="PRK07118.1-4"/>
    <property type="match status" value="1"/>
</dbReference>
<dbReference type="NCBIfam" id="TIGR01944">
    <property type="entry name" value="rnfB"/>
    <property type="match status" value="1"/>
</dbReference>
<dbReference type="NCBIfam" id="NF041836">
    <property type="entry name" value="rnfB_Methano"/>
    <property type="match status" value="1"/>
</dbReference>
<dbReference type="PANTHER" id="PTHR43560">
    <property type="entry name" value="ION-TRANSLOCATING OXIDOREDUCTASE COMPLEX SUBUNIT B"/>
    <property type="match status" value="1"/>
</dbReference>
<dbReference type="PANTHER" id="PTHR43560:SF1">
    <property type="entry name" value="ION-TRANSLOCATING OXIDOREDUCTASE COMPLEX SUBUNIT B"/>
    <property type="match status" value="1"/>
</dbReference>
<dbReference type="Pfam" id="PF00037">
    <property type="entry name" value="Fer4"/>
    <property type="match status" value="1"/>
</dbReference>
<dbReference type="Pfam" id="PF13187">
    <property type="entry name" value="Fer4_9"/>
    <property type="match status" value="1"/>
</dbReference>
<dbReference type="Pfam" id="PF04060">
    <property type="entry name" value="FeS"/>
    <property type="match status" value="1"/>
</dbReference>
<dbReference type="SUPFAM" id="SSF54862">
    <property type="entry name" value="4Fe-4S ferredoxins"/>
    <property type="match status" value="1"/>
</dbReference>
<dbReference type="PROSITE" id="PS00197">
    <property type="entry name" value="2FE2S_FER_1"/>
    <property type="match status" value="1"/>
</dbReference>
<dbReference type="PROSITE" id="PS51656">
    <property type="entry name" value="4FE4S"/>
    <property type="match status" value="1"/>
</dbReference>
<dbReference type="PROSITE" id="PS00198">
    <property type="entry name" value="4FE4S_FER_1"/>
    <property type="match status" value="3"/>
</dbReference>
<dbReference type="PROSITE" id="PS51379">
    <property type="entry name" value="4FE4S_FER_2"/>
    <property type="match status" value="4"/>
</dbReference>
<reference key="1">
    <citation type="journal article" date="2002" name="Genome Res.">
        <title>The genome of Methanosarcina acetivorans reveals extensive metabolic and physiological diversity.</title>
        <authorList>
            <person name="Galagan J.E."/>
            <person name="Nusbaum C."/>
            <person name="Roy A."/>
            <person name="Endrizzi M.G."/>
            <person name="Macdonald P."/>
            <person name="FitzHugh W."/>
            <person name="Calvo S."/>
            <person name="Engels R."/>
            <person name="Smirnov S."/>
            <person name="Atnoor D."/>
            <person name="Brown A."/>
            <person name="Allen N."/>
            <person name="Naylor J."/>
            <person name="Stange-Thomann N."/>
            <person name="DeArellano K."/>
            <person name="Johnson R."/>
            <person name="Linton L."/>
            <person name="McEwan P."/>
            <person name="McKernan K."/>
            <person name="Talamas J."/>
            <person name="Tirrell A."/>
            <person name="Ye W."/>
            <person name="Zimmer A."/>
            <person name="Barber R.D."/>
            <person name="Cann I."/>
            <person name="Graham D.E."/>
            <person name="Grahame D.A."/>
            <person name="Guss A.M."/>
            <person name="Hedderich R."/>
            <person name="Ingram-Smith C."/>
            <person name="Kuettner H.C."/>
            <person name="Krzycki J.A."/>
            <person name="Leigh J.A."/>
            <person name="Li W."/>
            <person name="Liu J."/>
            <person name="Mukhopadhyay B."/>
            <person name="Reeve J.N."/>
            <person name="Smith K."/>
            <person name="Springer T.A."/>
            <person name="Umayam L.A."/>
            <person name="White O."/>
            <person name="White R.H."/>
            <person name="de Macario E.C."/>
            <person name="Ferry J.G."/>
            <person name="Jarrell K.F."/>
            <person name="Jing H."/>
            <person name="Macario A.J.L."/>
            <person name="Paulsen I.T."/>
            <person name="Pritchett M."/>
            <person name="Sowers K.R."/>
            <person name="Swanson R.V."/>
            <person name="Zinder S.H."/>
            <person name="Lander E."/>
            <person name="Metcalf W.W."/>
            <person name="Birren B."/>
        </authorList>
    </citation>
    <scope>NUCLEOTIDE SEQUENCE [LARGE SCALE GENOMIC DNA]</scope>
    <source>
        <strain>ATCC 35395 / DSM 2834 / JCM 12185 / C2A</strain>
    </source>
</reference>
<reference key="2">
    <citation type="journal article" date="2012" name="FEBS J.">
        <title>Electron transport during aceticlastic methanogenesis by Methanosarcina acetivorans involves a sodium-translocating Rnf complex.</title>
        <authorList>
            <person name="Schlegel K."/>
            <person name="Welte C."/>
            <person name="Deppenmeier U."/>
            <person name="Mueller V."/>
        </authorList>
    </citation>
    <scope>FUNCTION</scope>
    <scope>SUBUNIT</scope>
    <scope>DISRUPTION PHENOTYPE</scope>
    <source>
        <strain>ATCC 35395 / DSM 2834 / JCM 12185 / C2A</strain>
    </source>
</reference>
<reference key="3">
    <citation type="journal article" date="2014" name="PLoS ONE">
        <title>Characterization of the RnfB and RnfG subunits of the Rnf complex from the archaeon Methanosarcina acetivorans.</title>
        <authorList>
            <person name="Suharti S."/>
            <person name="Wang M."/>
            <person name="de Vries S."/>
            <person name="Ferry J.G."/>
        </authorList>
    </citation>
    <scope>COFACTOR</scope>
    <scope>SUBCELLULAR LOCATION</scope>
</reference>
<protein>
    <recommendedName>
        <fullName evidence="2 6">Ion-translocating oxidoreductase complex subunit B</fullName>
        <ecNumber evidence="2 6">7.2.1.-</ecNumber>
    </recommendedName>
    <alternativeName>
        <fullName evidence="2 6">Rnf electron transport complex subunit B</fullName>
    </alternativeName>
</protein>
<proteinExistence type="evidence at protein level"/>
<accession>Q8TSX9</accession>